<dbReference type="EMBL" id="CP000936">
    <property type="protein sequence ID" value="ACA36532.1"/>
    <property type="molecule type" value="Genomic_DNA"/>
</dbReference>
<dbReference type="RefSeq" id="WP_000403171.1">
    <property type="nucleotide sequence ID" value="NC_010380.1"/>
</dbReference>
<dbReference type="SMR" id="B1IA22"/>
<dbReference type="KEGG" id="spv:SPH_0594"/>
<dbReference type="HOGENOM" id="CLU_120023_0_0_9"/>
<dbReference type="Proteomes" id="UP000002163">
    <property type="component" value="Chromosome"/>
</dbReference>
<dbReference type="GO" id="GO:0005886">
    <property type="term" value="C:plasma membrane"/>
    <property type="evidence" value="ECO:0007669"/>
    <property type="project" value="UniProtKB-SubCell"/>
</dbReference>
<dbReference type="Gene3D" id="1.10.1760.20">
    <property type="match status" value="1"/>
</dbReference>
<dbReference type="HAMAP" id="MF_01572">
    <property type="entry name" value="UPF0397"/>
    <property type="match status" value="1"/>
</dbReference>
<dbReference type="InterPro" id="IPR009825">
    <property type="entry name" value="ECF_substrate-spec-like"/>
</dbReference>
<dbReference type="InterPro" id="IPR022914">
    <property type="entry name" value="UPF0397"/>
</dbReference>
<dbReference type="NCBIfam" id="NF010182">
    <property type="entry name" value="PRK13661.1"/>
    <property type="match status" value="1"/>
</dbReference>
<dbReference type="PANTHER" id="PTHR37815">
    <property type="entry name" value="UPF0397 PROTEIN BC_2624-RELATED"/>
    <property type="match status" value="1"/>
</dbReference>
<dbReference type="PANTHER" id="PTHR37815:SF3">
    <property type="entry name" value="UPF0397 PROTEIN SPR0429"/>
    <property type="match status" value="1"/>
</dbReference>
<dbReference type="Pfam" id="PF07155">
    <property type="entry name" value="ECF-ribofla_trS"/>
    <property type="match status" value="1"/>
</dbReference>
<name>Y594_STRPI</name>
<protein>
    <recommendedName>
        <fullName evidence="1">UPF0397 protein SPH_0594</fullName>
    </recommendedName>
</protein>
<sequence length="182" mass="19301">MEIKFTIKQVVAVGIGAALFVVIGMINIPTPVPNTSIQLQYAVQALLSIIFGPIIGLLVGVIGHAIKDSLAGYGLWWTWIIASGLFGLVVGLFRKYVRVINGVFDWKDILIFNLIQLLANALVWGVLAPLGDVVIYQEAAEKVFAQGIVAGIANGVSVAIAGTLLLLAYAGTQTRAGSLKKD</sequence>
<proteinExistence type="inferred from homology"/>
<gene>
    <name type="ordered locus">SPH_0594</name>
</gene>
<feature type="chain" id="PRO_1000200763" description="UPF0397 protein SPH_0594">
    <location>
        <begin position="1"/>
        <end position="182"/>
    </location>
</feature>
<feature type="transmembrane region" description="Helical" evidence="1">
    <location>
        <begin position="10"/>
        <end position="30"/>
    </location>
</feature>
<feature type="transmembrane region" description="Helical" evidence="1">
    <location>
        <begin position="46"/>
        <end position="66"/>
    </location>
</feature>
<feature type="transmembrane region" description="Helical" evidence="1">
    <location>
        <begin position="73"/>
        <end position="93"/>
    </location>
</feature>
<feature type="transmembrane region" description="Helical" evidence="1">
    <location>
        <begin position="109"/>
        <end position="129"/>
    </location>
</feature>
<feature type="transmembrane region" description="Helical" evidence="1">
    <location>
        <begin position="148"/>
        <end position="168"/>
    </location>
</feature>
<accession>B1IA22</accession>
<keyword id="KW-1003">Cell membrane</keyword>
<keyword id="KW-0472">Membrane</keyword>
<keyword id="KW-0812">Transmembrane</keyword>
<keyword id="KW-1133">Transmembrane helix</keyword>
<comment type="subcellular location">
    <subcellularLocation>
        <location evidence="1">Cell membrane</location>
        <topology evidence="1">Multi-pass membrane protein</topology>
    </subcellularLocation>
</comment>
<comment type="similarity">
    <text evidence="1">Belongs to the UPF0397 family.</text>
</comment>
<reference key="1">
    <citation type="journal article" date="2010" name="Genome Biol.">
        <title>Structure and dynamics of the pan-genome of Streptococcus pneumoniae and closely related species.</title>
        <authorList>
            <person name="Donati C."/>
            <person name="Hiller N.L."/>
            <person name="Tettelin H."/>
            <person name="Muzzi A."/>
            <person name="Croucher N.J."/>
            <person name="Angiuoli S.V."/>
            <person name="Oggioni M."/>
            <person name="Dunning Hotopp J.C."/>
            <person name="Hu F.Z."/>
            <person name="Riley D.R."/>
            <person name="Covacci A."/>
            <person name="Mitchell T.J."/>
            <person name="Bentley S.D."/>
            <person name="Kilian M."/>
            <person name="Ehrlich G.D."/>
            <person name="Rappuoli R."/>
            <person name="Moxon E.R."/>
            <person name="Masignani V."/>
        </authorList>
    </citation>
    <scope>NUCLEOTIDE SEQUENCE [LARGE SCALE GENOMIC DNA]</scope>
    <source>
        <strain>Hungary19A-6</strain>
    </source>
</reference>
<evidence type="ECO:0000255" key="1">
    <source>
        <dbReference type="HAMAP-Rule" id="MF_01572"/>
    </source>
</evidence>
<organism>
    <name type="scientific">Streptococcus pneumoniae (strain Hungary19A-6)</name>
    <dbReference type="NCBI Taxonomy" id="487214"/>
    <lineage>
        <taxon>Bacteria</taxon>
        <taxon>Bacillati</taxon>
        <taxon>Bacillota</taxon>
        <taxon>Bacilli</taxon>
        <taxon>Lactobacillales</taxon>
        <taxon>Streptococcaceae</taxon>
        <taxon>Streptococcus</taxon>
    </lineage>
</organism>